<reference key="1">
    <citation type="submission" date="2008-08" db="EMBL/GenBank/DDBJ databases">
        <title>The complete genome sequence of Thermodesulfovibrio yellowstonii strain ATCC 51303 / DSM 11347 / YP87.</title>
        <authorList>
            <person name="Dodson R.J."/>
            <person name="Durkin A.S."/>
            <person name="Wu M."/>
            <person name="Eisen J."/>
            <person name="Sutton G."/>
        </authorList>
    </citation>
    <scope>NUCLEOTIDE SEQUENCE [LARGE SCALE GENOMIC DNA]</scope>
    <source>
        <strain>ATCC 51303 / DSM 11347 / YP87</strain>
    </source>
</reference>
<gene>
    <name evidence="1" type="primary">ligA</name>
    <name type="ordered locus">THEYE_A2000</name>
</gene>
<keyword id="KW-0227">DNA damage</keyword>
<keyword id="KW-0234">DNA repair</keyword>
<keyword id="KW-0235">DNA replication</keyword>
<keyword id="KW-0436">Ligase</keyword>
<keyword id="KW-0460">Magnesium</keyword>
<keyword id="KW-0464">Manganese</keyword>
<keyword id="KW-0479">Metal-binding</keyword>
<keyword id="KW-0520">NAD</keyword>
<keyword id="KW-1185">Reference proteome</keyword>
<keyword id="KW-0862">Zinc</keyword>
<organism>
    <name type="scientific">Thermodesulfovibrio yellowstonii (strain ATCC 51303 / DSM 11347 / YP87)</name>
    <dbReference type="NCBI Taxonomy" id="289376"/>
    <lineage>
        <taxon>Bacteria</taxon>
        <taxon>Pseudomonadati</taxon>
        <taxon>Nitrospirota</taxon>
        <taxon>Thermodesulfovibrionia</taxon>
        <taxon>Thermodesulfovibrionales</taxon>
        <taxon>Thermodesulfovibrionaceae</taxon>
        <taxon>Thermodesulfovibrio</taxon>
    </lineage>
</organism>
<comment type="function">
    <text evidence="1">DNA ligase that catalyzes the formation of phosphodiester linkages between 5'-phosphoryl and 3'-hydroxyl groups in double-stranded DNA using NAD as a coenzyme and as the energy source for the reaction. It is essential for DNA replication and repair of damaged DNA.</text>
</comment>
<comment type="catalytic activity">
    <reaction evidence="1">
        <text>NAD(+) + (deoxyribonucleotide)n-3'-hydroxyl + 5'-phospho-(deoxyribonucleotide)m = (deoxyribonucleotide)n+m + AMP + beta-nicotinamide D-nucleotide.</text>
        <dbReference type="EC" id="6.5.1.2"/>
    </reaction>
</comment>
<comment type="cofactor">
    <cofactor evidence="1">
        <name>Mg(2+)</name>
        <dbReference type="ChEBI" id="CHEBI:18420"/>
    </cofactor>
    <cofactor evidence="1">
        <name>Mn(2+)</name>
        <dbReference type="ChEBI" id="CHEBI:29035"/>
    </cofactor>
</comment>
<comment type="similarity">
    <text evidence="1">Belongs to the NAD-dependent DNA ligase family. LigA subfamily.</text>
</comment>
<name>DNLJ_THEYD</name>
<evidence type="ECO:0000255" key="1">
    <source>
        <dbReference type="HAMAP-Rule" id="MF_01588"/>
    </source>
</evidence>
<protein>
    <recommendedName>
        <fullName evidence="1">DNA ligase</fullName>
        <ecNumber evidence="1">6.5.1.2</ecNumber>
    </recommendedName>
    <alternativeName>
        <fullName evidence="1">Polydeoxyribonucleotide synthase [NAD(+)]</fullName>
    </alternativeName>
</protein>
<accession>B5YIF8</accession>
<dbReference type="EC" id="6.5.1.2" evidence="1"/>
<dbReference type="EMBL" id="CP001147">
    <property type="protein sequence ID" value="ACI21243.1"/>
    <property type="molecule type" value="Genomic_DNA"/>
</dbReference>
<dbReference type="RefSeq" id="WP_012545963.1">
    <property type="nucleotide sequence ID" value="NC_011296.1"/>
</dbReference>
<dbReference type="RefSeq" id="YP_002249789.1">
    <property type="nucleotide sequence ID" value="NC_011296.1"/>
</dbReference>
<dbReference type="SMR" id="B5YIF8"/>
<dbReference type="FunCoup" id="B5YIF8">
    <property type="interactions" value="385"/>
</dbReference>
<dbReference type="STRING" id="289376.THEYE_A2000"/>
<dbReference type="EnsemblBacteria" id="ACI21243">
    <property type="protein sequence ID" value="ACI21243"/>
    <property type="gene ID" value="THEYE_A2000"/>
</dbReference>
<dbReference type="KEGG" id="tye:THEYE_A2000"/>
<dbReference type="PATRIC" id="fig|289376.4.peg.1954"/>
<dbReference type="eggNOG" id="COG0272">
    <property type="taxonomic scope" value="Bacteria"/>
</dbReference>
<dbReference type="HOGENOM" id="CLU_007764_2_1_0"/>
<dbReference type="InParanoid" id="B5YIF8"/>
<dbReference type="OrthoDB" id="9759736at2"/>
<dbReference type="Proteomes" id="UP000000718">
    <property type="component" value="Chromosome"/>
</dbReference>
<dbReference type="GO" id="GO:0005829">
    <property type="term" value="C:cytosol"/>
    <property type="evidence" value="ECO:0000318"/>
    <property type="project" value="GO_Central"/>
</dbReference>
<dbReference type="GO" id="GO:0003677">
    <property type="term" value="F:DNA binding"/>
    <property type="evidence" value="ECO:0007669"/>
    <property type="project" value="InterPro"/>
</dbReference>
<dbReference type="GO" id="GO:0003911">
    <property type="term" value="F:DNA ligase (NAD+) activity"/>
    <property type="evidence" value="ECO:0000318"/>
    <property type="project" value="GO_Central"/>
</dbReference>
<dbReference type="GO" id="GO:0046872">
    <property type="term" value="F:metal ion binding"/>
    <property type="evidence" value="ECO:0007669"/>
    <property type="project" value="UniProtKB-KW"/>
</dbReference>
<dbReference type="GO" id="GO:0006281">
    <property type="term" value="P:DNA repair"/>
    <property type="evidence" value="ECO:0007669"/>
    <property type="project" value="UniProtKB-KW"/>
</dbReference>
<dbReference type="GO" id="GO:0006260">
    <property type="term" value="P:DNA replication"/>
    <property type="evidence" value="ECO:0007669"/>
    <property type="project" value="UniProtKB-KW"/>
</dbReference>
<dbReference type="CDD" id="cd17748">
    <property type="entry name" value="BRCT_DNA_ligase_like"/>
    <property type="match status" value="1"/>
</dbReference>
<dbReference type="CDD" id="cd00114">
    <property type="entry name" value="LIGANc"/>
    <property type="match status" value="1"/>
</dbReference>
<dbReference type="FunFam" id="1.10.150.20:FF:000006">
    <property type="entry name" value="DNA ligase"/>
    <property type="match status" value="1"/>
</dbReference>
<dbReference type="FunFam" id="1.10.150.20:FF:000007">
    <property type="entry name" value="DNA ligase"/>
    <property type="match status" value="1"/>
</dbReference>
<dbReference type="FunFam" id="1.10.287.610:FF:000002">
    <property type="entry name" value="DNA ligase"/>
    <property type="match status" value="1"/>
</dbReference>
<dbReference type="FunFam" id="2.40.50.140:FF:000012">
    <property type="entry name" value="DNA ligase"/>
    <property type="match status" value="1"/>
</dbReference>
<dbReference type="FunFam" id="3.30.470.30:FF:000001">
    <property type="entry name" value="DNA ligase"/>
    <property type="match status" value="1"/>
</dbReference>
<dbReference type="Gene3D" id="6.20.10.30">
    <property type="match status" value="1"/>
</dbReference>
<dbReference type="Gene3D" id="1.10.150.20">
    <property type="entry name" value="5' to 3' exonuclease, C-terminal subdomain"/>
    <property type="match status" value="2"/>
</dbReference>
<dbReference type="Gene3D" id="3.40.50.10190">
    <property type="entry name" value="BRCT domain"/>
    <property type="match status" value="1"/>
</dbReference>
<dbReference type="Gene3D" id="3.30.470.30">
    <property type="entry name" value="DNA ligase/mRNA capping enzyme"/>
    <property type="match status" value="1"/>
</dbReference>
<dbReference type="Gene3D" id="1.10.287.610">
    <property type="entry name" value="Helix hairpin bin"/>
    <property type="match status" value="1"/>
</dbReference>
<dbReference type="Gene3D" id="2.40.50.140">
    <property type="entry name" value="Nucleic acid-binding proteins"/>
    <property type="match status" value="1"/>
</dbReference>
<dbReference type="HAMAP" id="MF_01588">
    <property type="entry name" value="DNA_ligase_A"/>
    <property type="match status" value="1"/>
</dbReference>
<dbReference type="InterPro" id="IPR001357">
    <property type="entry name" value="BRCT_dom"/>
</dbReference>
<dbReference type="InterPro" id="IPR036420">
    <property type="entry name" value="BRCT_dom_sf"/>
</dbReference>
<dbReference type="InterPro" id="IPR041663">
    <property type="entry name" value="DisA/LigA_HHH"/>
</dbReference>
<dbReference type="InterPro" id="IPR001679">
    <property type="entry name" value="DNA_ligase"/>
</dbReference>
<dbReference type="InterPro" id="IPR033136">
    <property type="entry name" value="DNA_ligase_CS"/>
</dbReference>
<dbReference type="InterPro" id="IPR013839">
    <property type="entry name" value="DNAligase_adenylation"/>
</dbReference>
<dbReference type="InterPro" id="IPR013840">
    <property type="entry name" value="DNAligase_N"/>
</dbReference>
<dbReference type="InterPro" id="IPR003583">
    <property type="entry name" value="Hlx-hairpin-Hlx_DNA-bd_motif"/>
</dbReference>
<dbReference type="InterPro" id="IPR012340">
    <property type="entry name" value="NA-bd_OB-fold"/>
</dbReference>
<dbReference type="InterPro" id="IPR004150">
    <property type="entry name" value="NAD_DNA_ligase_OB"/>
</dbReference>
<dbReference type="InterPro" id="IPR010994">
    <property type="entry name" value="RuvA_2-like"/>
</dbReference>
<dbReference type="InterPro" id="IPR004149">
    <property type="entry name" value="Znf_DNAligase_C4"/>
</dbReference>
<dbReference type="NCBIfam" id="TIGR00575">
    <property type="entry name" value="dnlj"/>
    <property type="match status" value="1"/>
</dbReference>
<dbReference type="NCBIfam" id="NF005932">
    <property type="entry name" value="PRK07956.1"/>
    <property type="match status" value="1"/>
</dbReference>
<dbReference type="PANTHER" id="PTHR23389">
    <property type="entry name" value="CHROMOSOME TRANSMISSION FIDELITY FACTOR 18"/>
    <property type="match status" value="1"/>
</dbReference>
<dbReference type="PANTHER" id="PTHR23389:SF9">
    <property type="entry name" value="DNA LIGASE"/>
    <property type="match status" value="1"/>
</dbReference>
<dbReference type="Pfam" id="PF00533">
    <property type="entry name" value="BRCT"/>
    <property type="match status" value="1"/>
</dbReference>
<dbReference type="Pfam" id="PF01653">
    <property type="entry name" value="DNA_ligase_aden"/>
    <property type="match status" value="1"/>
</dbReference>
<dbReference type="Pfam" id="PF03120">
    <property type="entry name" value="DNA_ligase_OB"/>
    <property type="match status" value="1"/>
</dbReference>
<dbReference type="Pfam" id="PF03119">
    <property type="entry name" value="DNA_ligase_ZBD"/>
    <property type="match status" value="1"/>
</dbReference>
<dbReference type="Pfam" id="PF12826">
    <property type="entry name" value="HHH_2"/>
    <property type="match status" value="1"/>
</dbReference>
<dbReference type="Pfam" id="PF22745">
    <property type="entry name" value="Nlig-Ia"/>
    <property type="match status" value="1"/>
</dbReference>
<dbReference type="PIRSF" id="PIRSF001604">
    <property type="entry name" value="LigA"/>
    <property type="match status" value="1"/>
</dbReference>
<dbReference type="SMART" id="SM00292">
    <property type="entry name" value="BRCT"/>
    <property type="match status" value="1"/>
</dbReference>
<dbReference type="SMART" id="SM00278">
    <property type="entry name" value="HhH1"/>
    <property type="match status" value="3"/>
</dbReference>
<dbReference type="SMART" id="SM00532">
    <property type="entry name" value="LIGANc"/>
    <property type="match status" value="1"/>
</dbReference>
<dbReference type="SUPFAM" id="SSF52113">
    <property type="entry name" value="BRCT domain"/>
    <property type="match status" value="1"/>
</dbReference>
<dbReference type="SUPFAM" id="SSF56091">
    <property type="entry name" value="DNA ligase/mRNA capping enzyme, catalytic domain"/>
    <property type="match status" value="1"/>
</dbReference>
<dbReference type="SUPFAM" id="SSF50249">
    <property type="entry name" value="Nucleic acid-binding proteins"/>
    <property type="match status" value="1"/>
</dbReference>
<dbReference type="SUPFAM" id="SSF47781">
    <property type="entry name" value="RuvA domain 2-like"/>
    <property type="match status" value="1"/>
</dbReference>
<dbReference type="PROSITE" id="PS50172">
    <property type="entry name" value="BRCT"/>
    <property type="match status" value="1"/>
</dbReference>
<dbReference type="PROSITE" id="PS01056">
    <property type="entry name" value="DNA_LIGASE_N2"/>
    <property type="match status" value="1"/>
</dbReference>
<proteinExistence type="inferred from homology"/>
<sequence>MKQIPEDIKKEIEKLVKELNYHNYRYYVLDSPVISDEEYDMMLRRLKELEEKWGYILPDSPTQRVGAAPSEKFEKAEHREPMLSLDNAFSIEELRDFDARVKRLLGSSEEVEYTVEPKYDGLAVELSYKDGLLYKASTRGDGYVGEDITQNIKTIKAIPLRIEGVDKIPEEIDIRGEVYLNIDEFERINKERIEKGEPVFANPRNAASGSVRQLDPSITASRRLYMSCYGIGYVKGIEFKSQIEFIEWLKKGRFPVPAYVKLAKGIEEVIEAIKEIEKLRQGYPFETDGAVVKVNSFELQRKLGTKTREPRWAIAYKYPAHQGITKLKDILASVGRTGVITPVAVLEPVKIGGVTVSRSTLHNWDEVERKDIRVGDYVIVERAGEVIPHIIGVVKDRRTGEEKEVKIPEHCPVCGSKTVREPGEVAVKCINFNCPAQVEERIKHFASRRAMNIEGLGDKTVELLHNKGIIKHFVDLYKLRQEDIKGLPGFAELSSKKLIEAIAKSKKTTLSRLLYALGISQVGEYASKLLAQHFRKLEDLYHIKAEKLVQIPQIGEKTAKTIEQFFNNEENLKAIEELKRMGLKVENPEFEEEKKPSPLKGLTFVITGTLPKPREEVKEMIEKAGGKVSSSVSKNTDYLLVGEDPGSKLAKAQALRVKTLSYEEFLKMLE</sequence>
<feature type="chain" id="PRO_0000380498" description="DNA ligase">
    <location>
        <begin position="1"/>
        <end position="670"/>
    </location>
</feature>
<feature type="domain" description="BRCT" evidence="1">
    <location>
        <begin position="594"/>
        <end position="670"/>
    </location>
</feature>
<feature type="active site" description="N6-AMP-lysine intermediate" evidence="1">
    <location>
        <position position="118"/>
    </location>
</feature>
<feature type="binding site" evidence="1">
    <location>
        <begin position="36"/>
        <end position="40"/>
    </location>
    <ligand>
        <name>NAD(+)</name>
        <dbReference type="ChEBI" id="CHEBI:57540"/>
    </ligand>
</feature>
<feature type="binding site" evidence="1">
    <location>
        <begin position="84"/>
        <end position="85"/>
    </location>
    <ligand>
        <name>NAD(+)</name>
        <dbReference type="ChEBI" id="CHEBI:57540"/>
    </ligand>
</feature>
<feature type="binding site" evidence="1">
    <location>
        <position position="116"/>
    </location>
    <ligand>
        <name>NAD(+)</name>
        <dbReference type="ChEBI" id="CHEBI:57540"/>
    </ligand>
</feature>
<feature type="binding site" evidence="1">
    <location>
        <position position="139"/>
    </location>
    <ligand>
        <name>NAD(+)</name>
        <dbReference type="ChEBI" id="CHEBI:57540"/>
    </ligand>
</feature>
<feature type="binding site" evidence="1">
    <location>
        <position position="177"/>
    </location>
    <ligand>
        <name>NAD(+)</name>
        <dbReference type="ChEBI" id="CHEBI:57540"/>
    </ligand>
</feature>
<feature type="binding site" evidence="1">
    <location>
        <position position="293"/>
    </location>
    <ligand>
        <name>NAD(+)</name>
        <dbReference type="ChEBI" id="CHEBI:57540"/>
    </ligand>
</feature>
<feature type="binding site" evidence="1">
    <location>
        <position position="317"/>
    </location>
    <ligand>
        <name>NAD(+)</name>
        <dbReference type="ChEBI" id="CHEBI:57540"/>
    </ligand>
</feature>
<feature type="binding site" evidence="1">
    <location>
        <position position="411"/>
    </location>
    <ligand>
        <name>Zn(2+)</name>
        <dbReference type="ChEBI" id="CHEBI:29105"/>
    </ligand>
</feature>
<feature type="binding site" evidence="1">
    <location>
        <position position="414"/>
    </location>
    <ligand>
        <name>Zn(2+)</name>
        <dbReference type="ChEBI" id="CHEBI:29105"/>
    </ligand>
</feature>
<feature type="binding site" evidence="1">
    <location>
        <position position="429"/>
    </location>
    <ligand>
        <name>Zn(2+)</name>
        <dbReference type="ChEBI" id="CHEBI:29105"/>
    </ligand>
</feature>
<feature type="binding site" evidence="1">
    <location>
        <position position="434"/>
    </location>
    <ligand>
        <name>Zn(2+)</name>
        <dbReference type="ChEBI" id="CHEBI:29105"/>
    </ligand>
</feature>